<evidence type="ECO:0000255" key="1">
    <source>
        <dbReference type="HAMAP-Rule" id="MF_00305"/>
    </source>
</evidence>
<evidence type="ECO:0000305" key="2"/>
<proteinExistence type="inferred from homology"/>
<organism>
    <name type="scientific">Methanosarcina acetivorans (strain ATCC 35395 / DSM 2834 / JCM 12185 / C2A)</name>
    <dbReference type="NCBI Taxonomy" id="188937"/>
    <lineage>
        <taxon>Archaea</taxon>
        <taxon>Methanobacteriati</taxon>
        <taxon>Methanobacteriota</taxon>
        <taxon>Stenosarchaea group</taxon>
        <taxon>Methanomicrobia</taxon>
        <taxon>Methanosarcinales</taxon>
        <taxon>Methanosarcinaceae</taxon>
        <taxon>Methanosarcina</taxon>
    </lineage>
</organism>
<dbReference type="EMBL" id="AE010299">
    <property type="protein sequence ID" value="AAM03745.1"/>
    <property type="status" value="ALT_INIT"/>
    <property type="molecule type" value="Genomic_DNA"/>
</dbReference>
<dbReference type="RefSeq" id="WP_048066074.1">
    <property type="nucleotide sequence ID" value="NC_003552.1"/>
</dbReference>
<dbReference type="SMR" id="Q8TTY3"/>
<dbReference type="FunCoup" id="Q8TTY3">
    <property type="interactions" value="65"/>
</dbReference>
<dbReference type="STRING" id="188937.MA_0292"/>
<dbReference type="EnsemblBacteria" id="AAM03745">
    <property type="protein sequence ID" value="AAM03745"/>
    <property type="gene ID" value="MA_0292"/>
</dbReference>
<dbReference type="GeneID" id="1472184"/>
<dbReference type="KEGG" id="mac:MA_0292"/>
<dbReference type="HOGENOM" id="CLU_169299_1_0_2"/>
<dbReference type="InParanoid" id="Q8TTY3"/>
<dbReference type="OrthoDB" id="56356at2157"/>
<dbReference type="PhylomeDB" id="Q8TTY3"/>
<dbReference type="Proteomes" id="UP000002487">
    <property type="component" value="Chromosome"/>
</dbReference>
<dbReference type="GO" id="GO:0048500">
    <property type="term" value="C:signal recognition particle"/>
    <property type="evidence" value="ECO:0007669"/>
    <property type="project" value="UniProtKB-UniRule"/>
</dbReference>
<dbReference type="GO" id="GO:0008312">
    <property type="term" value="F:7S RNA binding"/>
    <property type="evidence" value="ECO:0000318"/>
    <property type="project" value="GO_Central"/>
</dbReference>
<dbReference type="GO" id="GO:0006617">
    <property type="term" value="P:SRP-dependent cotranslational protein targeting to membrane, signal sequence recognition"/>
    <property type="evidence" value="ECO:0000318"/>
    <property type="project" value="GO_Central"/>
</dbReference>
<dbReference type="Gene3D" id="3.30.56.30">
    <property type="entry name" value="Signal recognition particle, SRP19-like subunit"/>
    <property type="match status" value="1"/>
</dbReference>
<dbReference type="HAMAP" id="MF_00305">
    <property type="entry name" value="SRP19"/>
    <property type="match status" value="1"/>
</dbReference>
<dbReference type="InterPro" id="IPR002778">
    <property type="entry name" value="Signal_recog_particle_SRP19"/>
</dbReference>
<dbReference type="InterPro" id="IPR036521">
    <property type="entry name" value="SRP19-like_sf"/>
</dbReference>
<dbReference type="InterPro" id="IPR022938">
    <property type="entry name" value="SRP19_arc-type"/>
</dbReference>
<dbReference type="NCBIfam" id="NF001973">
    <property type="entry name" value="PRK00754.1"/>
    <property type="match status" value="1"/>
</dbReference>
<dbReference type="PANTHER" id="PTHR17453">
    <property type="entry name" value="SIGNAL RECOGNITION PARTICLE 19 KD PROTEIN"/>
    <property type="match status" value="1"/>
</dbReference>
<dbReference type="PANTHER" id="PTHR17453:SF0">
    <property type="entry name" value="SIGNAL RECOGNITION PARTICLE 19 KDA PROTEIN"/>
    <property type="match status" value="1"/>
</dbReference>
<dbReference type="Pfam" id="PF01922">
    <property type="entry name" value="SRP19"/>
    <property type="match status" value="1"/>
</dbReference>
<dbReference type="SUPFAM" id="SSF69695">
    <property type="entry name" value="SRP19"/>
    <property type="match status" value="1"/>
</dbReference>
<protein>
    <recommendedName>
        <fullName evidence="1">Signal recognition particle 19 kDa protein</fullName>
        <shortName evidence="1">SRP19</shortName>
    </recommendedName>
</protein>
<feature type="chain" id="PRO_0000135216" description="Signal recognition particle 19 kDa protein">
    <location>
        <begin position="1"/>
        <end position="101"/>
    </location>
</feature>
<reference key="1">
    <citation type="journal article" date="2002" name="Genome Res.">
        <title>The genome of Methanosarcina acetivorans reveals extensive metabolic and physiological diversity.</title>
        <authorList>
            <person name="Galagan J.E."/>
            <person name="Nusbaum C."/>
            <person name="Roy A."/>
            <person name="Endrizzi M.G."/>
            <person name="Macdonald P."/>
            <person name="FitzHugh W."/>
            <person name="Calvo S."/>
            <person name="Engels R."/>
            <person name="Smirnov S."/>
            <person name="Atnoor D."/>
            <person name="Brown A."/>
            <person name="Allen N."/>
            <person name="Naylor J."/>
            <person name="Stange-Thomann N."/>
            <person name="DeArellano K."/>
            <person name="Johnson R."/>
            <person name="Linton L."/>
            <person name="McEwan P."/>
            <person name="McKernan K."/>
            <person name="Talamas J."/>
            <person name="Tirrell A."/>
            <person name="Ye W."/>
            <person name="Zimmer A."/>
            <person name="Barber R.D."/>
            <person name="Cann I."/>
            <person name="Graham D.E."/>
            <person name="Grahame D.A."/>
            <person name="Guss A.M."/>
            <person name="Hedderich R."/>
            <person name="Ingram-Smith C."/>
            <person name="Kuettner H.C."/>
            <person name="Krzycki J.A."/>
            <person name="Leigh J.A."/>
            <person name="Li W."/>
            <person name="Liu J."/>
            <person name="Mukhopadhyay B."/>
            <person name="Reeve J.N."/>
            <person name="Smith K."/>
            <person name="Springer T.A."/>
            <person name="Umayam L.A."/>
            <person name="White O."/>
            <person name="White R.H."/>
            <person name="de Macario E.C."/>
            <person name="Ferry J.G."/>
            <person name="Jarrell K.F."/>
            <person name="Jing H."/>
            <person name="Macario A.J.L."/>
            <person name="Paulsen I.T."/>
            <person name="Pritchett M."/>
            <person name="Sowers K.R."/>
            <person name="Swanson R.V."/>
            <person name="Zinder S.H."/>
            <person name="Lander E."/>
            <person name="Metcalf W.W."/>
            <person name="Birren B."/>
        </authorList>
    </citation>
    <scope>NUCLEOTIDE SEQUENCE [LARGE SCALE GENOMIC DNA]</scope>
    <source>
        <strain>ATCC 35395 / DSM 2834 / JCM 12185 / C2A</strain>
    </source>
</reference>
<comment type="function">
    <text evidence="1">Involved in targeting and insertion of nascent membrane proteins into the cytoplasmic membrane. Binds directly to 7S RNA and mediates binding of the 54 kDa subunit of the SRP.</text>
</comment>
<comment type="subunit">
    <text evidence="1">Part of the signal recognition particle protein translocation system, which is composed of SRP and FtsY. Archaeal SRP consists of a 7S RNA molecule of 300 nucleotides and two protein subunits: SRP54 and SRP19.</text>
</comment>
<comment type="subcellular location">
    <subcellularLocation>
        <location evidence="1">Cytoplasm</location>
    </subcellularLocation>
</comment>
<comment type="similarity">
    <text evidence="1">Belongs to the SRP19 family.</text>
</comment>
<comment type="sequence caution" evidence="2">
    <conflict type="erroneous initiation">
        <sequence resource="EMBL-CDS" id="AAM03745"/>
    </conflict>
    <text>Extended N-terminus.</text>
</comment>
<name>SRP19_METAC</name>
<keyword id="KW-0963">Cytoplasm</keyword>
<keyword id="KW-1185">Reference proteome</keyword>
<keyword id="KW-0687">Ribonucleoprotein</keyword>
<keyword id="KW-0694">RNA-binding</keyword>
<keyword id="KW-0733">Signal recognition particle</keyword>
<accession>Q8TTY3</accession>
<sequence>MKDKGKLVIWPAYIDQTRSRSNGRIISRKNAVKEPHLNEIKDAAKNLGLNPEVEPEKAYPKSWWEVSGRVLVDDRGPKSVIAKQISLEIRKKRGKGVPAKT</sequence>
<gene>
    <name evidence="1" type="primary">srp19</name>
    <name type="ordered locus">MA_0292</name>
</gene>